<sequence length="239" mass="27180">MNIEQFQSMLGERGISLSPRQLEQFEMYFETLVEWNEKMNLTAITEKEEVYLKHFFDSITAAFYYDFSNPLSICDVGAGAGFPSIPLKICFPHLKVTIVDSLQKRINFLNHLAQKLELSDVAFCHDRAETFGKKEHVRESYDIVMARAVARLSVLSELCLPLVKVGGTFIAMKGAAANEEIENGKYAVEVLGGQLEEVSTFQLPFEESERNILLIKKKRKTPKKYPRKPGTPNKLPIEK</sequence>
<keyword id="KW-0963">Cytoplasm</keyword>
<keyword id="KW-0489">Methyltransferase</keyword>
<keyword id="KW-0698">rRNA processing</keyword>
<keyword id="KW-0949">S-adenosyl-L-methionine</keyword>
<keyword id="KW-0808">Transferase</keyword>
<accession>A7GVP5</accession>
<dbReference type="EC" id="2.1.1.-" evidence="1"/>
<dbReference type="EMBL" id="CP000764">
    <property type="protein sequence ID" value="ABS24203.1"/>
    <property type="molecule type" value="Genomic_DNA"/>
</dbReference>
<dbReference type="RefSeq" id="WP_012096467.1">
    <property type="nucleotide sequence ID" value="NC_009674.1"/>
</dbReference>
<dbReference type="SMR" id="A7GVP5"/>
<dbReference type="STRING" id="315749.Bcer98_4022"/>
<dbReference type="GeneID" id="33899252"/>
<dbReference type="KEGG" id="bcy:Bcer98_4022"/>
<dbReference type="eggNOG" id="COG0357">
    <property type="taxonomic scope" value="Bacteria"/>
</dbReference>
<dbReference type="HOGENOM" id="CLU_065341_0_2_9"/>
<dbReference type="OrthoDB" id="9808773at2"/>
<dbReference type="Proteomes" id="UP000002300">
    <property type="component" value="Chromosome"/>
</dbReference>
<dbReference type="GO" id="GO:0005829">
    <property type="term" value="C:cytosol"/>
    <property type="evidence" value="ECO:0007669"/>
    <property type="project" value="TreeGrafter"/>
</dbReference>
<dbReference type="GO" id="GO:0070043">
    <property type="term" value="F:rRNA (guanine-N7-)-methyltransferase activity"/>
    <property type="evidence" value="ECO:0007669"/>
    <property type="project" value="UniProtKB-UniRule"/>
</dbReference>
<dbReference type="CDD" id="cd02440">
    <property type="entry name" value="AdoMet_MTases"/>
    <property type="match status" value="1"/>
</dbReference>
<dbReference type="FunFam" id="3.40.50.150:FF:000041">
    <property type="entry name" value="Ribosomal RNA small subunit methyltransferase G"/>
    <property type="match status" value="1"/>
</dbReference>
<dbReference type="Gene3D" id="3.40.50.150">
    <property type="entry name" value="Vaccinia Virus protein VP39"/>
    <property type="match status" value="1"/>
</dbReference>
<dbReference type="HAMAP" id="MF_00074">
    <property type="entry name" value="16SrRNA_methyltr_G"/>
    <property type="match status" value="1"/>
</dbReference>
<dbReference type="InterPro" id="IPR003682">
    <property type="entry name" value="rRNA_ssu_MeTfrase_G"/>
</dbReference>
<dbReference type="InterPro" id="IPR029063">
    <property type="entry name" value="SAM-dependent_MTases_sf"/>
</dbReference>
<dbReference type="NCBIfam" id="TIGR00138">
    <property type="entry name" value="rsmG_gidB"/>
    <property type="match status" value="1"/>
</dbReference>
<dbReference type="PANTHER" id="PTHR31760">
    <property type="entry name" value="S-ADENOSYL-L-METHIONINE-DEPENDENT METHYLTRANSFERASES SUPERFAMILY PROTEIN"/>
    <property type="match status" value="1"/>
</dbReference>
<dbReference type="PANTHER" id="PTHR31760:SF0">
    <property type="entry name" value="S-ADENOSYL-L-METHIONINE-DEPENDENT METHYLTRANSFERASES SUPERFAMILY PROTEIN"/>
    <property type="match status" value="1"/>
</dbReference>
<dbReference type="Pfam" id="PF02527">
    <property type="entry name" value="GidB"/>
    <property type="match status" value="1"/>
</dbReference>
<dbReference type="PIRSF" id="PIRSF003078">
    <property type="entry name" value="GidB"/>
    <property type="match status" value="1"/>
</dbReference>
<dbReference type="SUPFAM" id="SSF53335">
    <property type="entry name" value="S-adenosyl-L-methionine-dependent methyltransferases"/>
    <property type="match status" value="1"/>
</dbReference>
<evidence type="ECO:0000255" key="1">
    <source>
        <dbReference type="HAMAP-Rule" id="MF_00074"/>
    </source>
</evidence>
<evidence type="ECO:0000256" key="2">
    <source>
        <dbReference type="SAM" id="MobiDB-lite"/>
    </source>
</evidence>
<gene>
    <name evidence="1" type="primary">rsmG</name>
    <name type="ordered locus">Bcer98_4022</name>
</gene>
<feature type="chain" id="PRO_1000075213" description="Ribosomal RNA small subunit methyltransferase G">
    <location>
        <begin position="1"/>
        <end position="239"/>
    </location>
</feature>
<feature type="region of interest" description="Disordered" evidence="2">
    <location>
        <begin position="219"/>
        <end position="239"/>
    </location>
</feature>
<feature type="binding site" evidence="1">
    <location>
        <position position="77"/>
    </location>
    <ligand>
        <name>S-adenosyl-L-methionine</name>
        <dbReference type="ChEBI" id="CHEBI:59789"/>
    </ligand>
</feature>
<feature type="binding site" evidence="1">
    <location>
        <position position="82"/>
    </location>
    <ligand>
        <name>S-adenosyl-L-methionine</name>
        <dbReference type="ChEBI" id="CHEBI:59789"/>
    </ligand>
</feature>
<feature type="binding site" evidence="1">
    <location>
        <begin position="128"/>
        <end position="129"/>
    </location>
    <ligand>
        <name>S-adenosyl-L-methionine</name>
        <dbReference type="ChEBI" id="CHEBI:59789"/>
    </ligand>
</feature>
<feature type="binding site" evidence="1">
    <location>
        <position position="147"/>
    </location>
    <ligand>
        <name>S-adenosyl-L-methionine</name>
        <dbReference type="ChEBI" id="CHEBI:59789"/>
    </ligand>
</feature>
<proteinExistence type="inferred from homology"/>
<name>RSMG_BACCN</name>
<comment type="function">
    <text evidence="1">Specifically methylates the N7 position of guanine in position 535 of 16S rRNA.</text>
</comment>
<comment type="subcellular location">
    <subcellularLocation>
        <location evidence="1">Cytoplasm</location>
    </subcellularLocation>
</comment>
<comment type="similarity">
    <text evidence="1">Belongs to the methyltransferase superfamily. RNA methyltransferase RsmG family.</text>
</comment>
<organism>
    <name type="scientific">Bacillus cytotoxicus (strain DSM 22905 / CIP 110041 / 391-98 / NVH 391-98)</name>
    <dbReference type="NCBI Taxonomy" id="315749"/>
    <lineage>
        <taxon>Bacteria</taxon>
        <taxon>Bacillati</taxon>
        <taxon>Bacillota</taxon>
        <taxon>Bacilli</taxon>
        <taxon>Bacillales</taxon>
        <taxon>Bacillaceae</taxon>
        <taxon>Bacillus</taxon>
        <taxon>Bacillus cereus group</taxon>
    </lineage>
</organism>
<reference key="1">
    <citation type="journal article" date="2008" name="Chem. Biol. Interact.">
        <title>Extending the Bacillus cereus group genomics to putative food-borne pathogens of different toxicity.</title>
        <authorList>
            <person name="Lapidus A."/>
            <person name="Goltsman E."/>
            <person name="Auger S."/>
            <person name="Galleron N."/>
            <person name="Segurens B."/>
            <person name="Dossat C."/>
            <person name="Land M.L."/>
            <person name="Broussolle V."/>
            <person name="Brillard J."/>
            <person name="Guinebretiere M.-H."/>
            <person name="Sanchis V."/>
            <person name="Nguen-the C."/>
            <person name="Lereclus D."/>
            <person name="Richardson P."/>
            <person name="Wincker P."/>
            <person name="Weissenbach J."/>
            <person name="Ehrlich S.D."/>
            <person name="Sorokin A."/>
        </authorList>
    </citation>
    <scope>NUCLEOTIDE SEQUENCE [LARGE SCALE GENOMIC DNA]</scope>
    <source>
        <strain>DSM 22905 / CIP 110041 / 391-98 / NVH 391-98</strain>
    </source>
</reference>
<protein>
    <recommendedName>
        <fullName evidence="1">Ribosomal RNA small subunit methyltransferase G</fullName>
        <ecNumber evidence="1">2.1.1.-</ecNumber>
    </recommendedName>
    <alternativeName>
        <fullName evidence="1">16S rRNA 7-methylguanosine methyltransferase</fullName>
        <shortName evidence="1">16S rRNA m7G methyltransferase</shortName>
    </alternativeName>
</protein>